<name>COXX_SALRD</name>
<dbReference type="EC" id="2.5.1.141" evidence="1"/>
<dbReference type="EMBL" id="CP000159">
    <property type="protein sequence ID" value="ABC46358.1"/>
    <property type="status" value="ALT_INIT"/>
    <property type="molecule type" value="Genomic_DNA"/>
</dbReference>
<dbReference type="RefSeq" id="YP_446469.1">
    <property type="nucleotide sequence ID" value="NC_007677.1"/>
</dbReference>
<dbReference type="SMR" id="Q2S012"/>
<dbReference type="STRING" id="309807.SRU_2369"/>
<dbReference type="EnsemblBacteria" id="ABC46358">
    <property type="protein sequence ID" value="ABC46358"/>
    <property type="gene ID" value="SRU_2369"/>
</dbReference>
<dbReference type="KEGG" id="sru:SRU_2369"/>
<dbReference type="PATRIC" id="fig|309807.25.peg.2468"/>
<dbReference type="eggNOG" id="COG0109">
    <property type="taxonomic scope" value="Bacteria"/>
</dbReference>
<dbReference type="HOGENOM" id="CLU_029631_3_2_10"/>
<dbReference type="OrthoDB" id="9814417at2"/>
<dbReference type="UniPathway" id="UPA00834">
    <property type="reaction ID" value="UER00712"/>
</dbReference>
<dbReference type="Proteomes" id="UP000008674">
    <property type="component" value="Chromosome"/>
</dbReference>
<dbReference type="GO" id="GO:0005886">
    <property type="term" value="C:plasma membrane"/>
    <property type="evidence" value="ECO:0007669"/>
    <property type="project" value="UniProtKB-SubCell"/>
</dbReference>
<dbReference type="GO" id="GO:0008495">
    <property type="term" value="F:protoheme IX farnesyltransferase activity"/>
    <property type="evidence" value="ECO:0007669"/>
    <property type="project" value="UniProtKB-UniRule"/>
</dbReference>
<dbReference type="GO" id="GO:0006784">
    <property type="term" value="P:heme A biosynthetic process"/>
    <property type="evidence" value="ECO:0007669"/>
    <property type="project" value="TreeGrafter"/>
</dbReference>
<dbReference type="GO" id="GO:0048034">
    <property type="term" value="P:heme O biosynthetic process"/>
    <property type="evidence" value="ECO:0007669"/>
    <property type="project" value="UniProtKB-UniRule"/>
</dbReference>
<dbReference type="CDD" id="cd13957">
    <property type="entry name" value="PT_UbiA_Cox10"/>
    <property type="match status" value="1"/>
</dbReference>
<dbReference type="Gene3D" id="1.10.357.140">
    <property type="entry name" value="UbiA prenyltransferase"/>
    <property type="match status" value="1"/>
</dbReference>
<dbReference type="HAMAP" id="MF_00154">
    <property type="entry name" value="CyoE_CtaB"/>
    <property type="match status" value="1"/>
</dbReference>
<dbReference type="InterPro" id="IPR006369">
    <property type="entry name" value="Protohaem_IX_farnesylTrfase"/>
</dbReference>
<dbReference type="InterPro" id="IPR000537">
    <property type="entry name" value="UbiA_prenyltransferase"/>
</dbReference>
<dbReference type="InterPro" id="IPR030470">
    <property type="entry name" value="UbiA_prenylTrfase_CS"/>
</dbReference>
<dbReference type="InterPro" id="IPR044878">
    <property type="entry name" value="UbiA_sf"/>
</dbReference>
<dbReference type="NCBIfam" id="TIGR01473">
    <property type="entry name" value="cyoE_ctaB"/>
    <property type="match status" value="1"/>
</dbReference>
<dbReference type="PANTHER" id="PTHR43448">
    <property type="entry name" value="PROTOHEME IX FARNESYLTRANSFERASE, MITOCHONDRIAL"/>
    <property type="match status" value="1"/>
</dbReference>
<dbReference type="PANTHER" id="PTHR43448:SF2">
    <property type="entry name" value="PROTOHEME IX FARNESYLTRANSFERASE, MITOCHONDRIAL"/>
    <property type="match status" value="1"/>
</dbReference>
<dbReference type="Pfam" id="PF01040">
    <property type="entry name" value="UbiA"/>
    <property type="match status" value="1"/>
</dbReference>
<dbReference type="PROSITE" id="PS00943">
    <property type="entry name" value="UBIA"/>
    <property type="match status" value="1"/>
</dbReference>
<keyword id="KW-0997">Cell inner membrane</keyword>
<keyword id="KW-1003">Cell membrane</keyword>
<keyword id="KW-0350">Heme biosynthesis</keyword>
<keyword id="KW-0472">Membrane</keyword>
<keyword id="KW-1185">Reference proteome</keyword>
<keyword id="KW-0808">Transferase</keyword>
<keyword id="KW-0812">Transmembrane</keyword>
<keyword id="KW-1133">Transmembrane helix</keyword>
<accession>Q2S012</accession>
<sequence>MLWDYLILAKPEISSVVTLSAFAGFLIGSPTGLDGGTLLWTMLGTALCAGGVGTLNHVLERRYDAQMKRTAQRPLPAGRADPKMARRVGILLVCLAVGLLCPLVNVLTAVLAALTAVLYLFVYTPLKRTTKWNTLVGTVPGALPALGGYTAATGHLGAGGWATFGILATWQMPHFLSLAWMYRKDYARGDYAMLPVVEPDGNSTAAQMIGFAALLVPVSVLPVLTEAAGWIYGVGVVPLGLWFLWTTIVFHGERTGQKAKRVLKASVLYIPGLVALLLVDWFL</sequence>
<organism>
    <name type="scientific">Salinibacter ruber (strain DSM 13855 / M31)</name>
    <dbReference type="NCBI Taxonomy" id="309807"/>
    <lineage>
        <taxon>Bacteria</taxon>
        <taxon>Pseudomonadati</taxon>
        <taxon>Rhodothermota</taxon>
        <taxon>Rhodothermia</taxon>
        <taxon>Rhodothermales</taxon>
        <taxon>Salinibacteraceae</taxon>
        <taxon>Salinibacter</taxon>
    </lineage>
</organism>
<gene>
    <name evidence="1" type="primary">ctaB</name>
    <name type="ordered locus">SRU_2369</name>
</gene>
<proteinExistence type="inferred from homology"/>
<protein>
    <recommendedName>
        <fullName evidence="1">Protoheme IX farnesyltransferase</fullName>
        <ecNumber evidence="1">2.5.1.141</ecNumber>
    </recommendedName>
    <alternativeName>
        <fullName evidence="1">Heme B farnesyltransferase</fullName>
    </alternativeName>
    <alternativeName>
        <fullName evidence="1">Heme O synthase</fullName>
    </alternativeName>
</protein>
<reference key="1">
    <citation type="journal article" date="2005" name="Proc. Natl. Acad. Sci. U.S.A.">
        <title>The genome of Salinibacter ruber: convergence and gene exchange among hyperhalophilic bacteria and archaea.</title>
        <authorList>
            <person name="Mongodin E.F."/>
            <person name="Nelson K.E."/>
            <person name="Daugherty S."/>
            <person name="DeBoy R.T."/>
            <person name="Wister J."/>
            <person name="Khouri H."/>
            <person name="Weidman J."/>
            <person name="Walsh D.A."/>
            <person name="Papke R.T."/>
            <person name="Sanchez Perez G."/>
            <person name="Sharma A.K."/>
            <person name="Nesbo C.L."/>
            <person name="MacLeod D."/>
            <person name="Bapteste E."/>
            <person name="Doolittle W.F."/>
            <person name="Charlebois R.L."/>
            <person name="Legault B."/>
            <person name="Rodriguez-Valera F."/>
        </authorList>
    </citation>
    <scope>NUCLEOTIDE SEQUENCE [LARGE SCALE GENOMIC DNA]</scope>
    <source>
        <strain>DSM 13855 / CECT 5946 / M31</strain>
    </source>
</reference>
<comment type="function">
    <text evidence="1">Converts heme B (protoheme IX) to heme O by substitution of the vinyl group on carbon 2 of heme B porphyrin ring with a hydroxyethyl farnesyl side group.</text>
</comment>
<comment type="catalytic activity">
    <reaction evidence="1">
        <text>heme b + (2E,6E)-farnesyl diphosphate + H2O = Fe(II)-heme o + diphosphate</text>
        <dbReference type="Rhea" id="RHEA:28070"/>
        <dbReference type="ChEBI" id="CHEBI:15377"/>
        <dbReference type="ChEBI" id="CHEBI:33019"/>
        <dbReference type="ChEBI" id="CHEBI:60344"/>
        <dbReference type="ChEBI" id="CHEBI:60530"/>
        <dbReference type="ChEBI" id="CHEBI:175763"/>
        <dbReference type="EC" id="2.5.1.141"/>
    </reaction>
</comment>
<comment type="pathway">
    <text evidence="1">Porphyrin-containing compound metabolism; heme O biosynthesis; heme O from protoheme: step 1/1.</text>
</comment>
<comment type="subcellular location">
    <subcellularLocation>
        <location evidence="1">Cell inner membrane</location>
        <topology evidence="1">Multi-pass membrane protein</topology>
    </subcellularLocation>
</comment>
<comment type="miscellaneous">
    <text evidence="1">Carbon 2 of the heme B porphyrin ring is defined according to the Fischer nomenclature.</text>
</comment>
<comment type="similarity">
    <text evidence="1">Belongs to the UbiA prenyltransferase family. Protoheme IX farnesyltransferase subfamily.</text>
</comment>
<comment type="sequence caution" evidence="2">
    <conflict type="erroneous initiation">
        <sequence resource="EMBL-CDS" id="ABC46358"/>
    </conflict>
</comment>
<evidence type="ECO:0000255" key="1">
    <source>
        <dbReference type="HAMAP-Rule" id="MF_00154"/>
    </source>
</evidence>
<evidence type="ECO:0000305" key="2"/>
<feature type="chain" id="PRO_0000346069" description="Protoheme IX farnesyltransferase">
    <location>
        <begin position="1"/>
        <end position="283"/>
    </location>
</feature>
<feature type="transmembrane region" description="Helical" evidence="1">
    <location>
        <begin position="13"/>
        <end position="33"/>
    </location>
</feature>
<feature type="transmembrane region" description="Helical" evidence="1">
    <location>
        <begin position="35"/>
        <end position="55"/>
    </location>
</feature>
<feature type="transmembrane region" description="Helical" evidence="1">
    <location>
        <begin position="90"/>
        <end position="110"/>
    </location>
</feature>
<feature type="transmembrane region" description="Helical" evidence="1">
    <location>
        <begin position="156"/>
        <end position="176"/>
    </location>
</feature>
<feature type="transmembrane region" description="Helical" evidence="1">
    <location>
        <begin position="208"/>
        <end position="228"/>
    </location>
</feature>
<feature type="transmembrane region" description="Helical" evidence="1">
    <location>
        <begin position="230"/>
        <end position="250"/>
    </location>
</feature>
<feature type="transmembrane region" description="Helical" evidence="1">
    <location>
        <begin position="262"/>
        <end position="282"/>
    </location>
</feature>